<protein>
    <recommendedName>
        <fullName evidence="1">Inner membrane-spanning protein YciB</fullName>
    </recommendedName>
</protein>
<accession>Q2SWP0</accession>
<keyword id="KW-0997">Cell inner membrane</keyword>
<keyword id="KW-1003">Cell membrane</keyword>
<keyword id="KW-0472">Membrane</keyword>
<keyword id="KW-0812">Transmembrane</keyword>
<keyword id="KW-1133">Transmembrane helix</keyword>
<organism>
    <name type="scientific">Burkholderia thailandensis (strain ATCC 700388 / DSM 13276 / CCUG 48851 / CIP 106301 / E264)</name>
    <dbReference type="NCBI Taxonomy" id="271848"/>
    <lineage>
        <taxon>Bacteria</taxon>
        <taxon>Pseudomonadati</taxon>
        <taxon>Pseudomonadota</taxon>
        <taxon>Betaproteobacteria</taxon>
        <taxon>Burkholderiales</taxon>
        <taxon>Burkholderiaceae</taxon>
        <taxon>Burkholderia</taxon>
        <taxon>pseudomallei group</taxon>
    </lineage>
</organism>
<comment type="function">
    <text evidence="1">Plays a role in cell envelope biogenesis, maintenance of cell envelope integrity and membrane homeostasis.</text>
</comment>
<comment type="subcellular location">
    <subcellularLocation>
        <location evidence="1">Cell inner membrane</location>
        <topology evidence="1">Multi-pass membrane protein</topology>
    </subcellularLocation>
</comment>
<comment type="similarity">
    <text evidence="1">Belongs to the YciB family.</text>
</comment>
<sequence length="176" mass="19959">MKFLFDLFPIILFFAAFKLWGIFTATAVAIAATLAQVAWVAFRHRKVDTMLWVSLGVIVVFGGATLVLHDEKFIQWKPTVLYWLFAVGLVAARYAFGKNLIEKMMGKQLTLPEPVWDKLNLAWAAFFAALGVTNLYVVRNFTESQWVNFKLFGTTGAIIVFVILQSLWLAKYLKGE</sequence>
<dbReference type="EMBL" id="CP000086">
    <property type="protein sequence ID" value="ABC37123.1"/>
    <property type="molecule type" value="Genomic_DNA"/>
</dbReference>
<dbReference type="RefSeq" id="WP_009890639.1">
    <property type="nucleotide sequence ID" value="NZ_CP008785.1"/>
</dbReference>
<dbReference type="GeneID" id="45121860"/>
<dbReference type="KEGG" id="bte:BTH_I2138"/>
<dbReference type="HOGENOM" id="CLU_089554_2_0_4"/>
<dbReference type="Proteomes" id="UP000001930">
    <property type="component" value="Chromosome I"/>
</dbReference>
<dbReference type="GO" id="GO:0005886">
    <property type="term" value="C:plasma membrane"/>
    <property type="evidence" value="ECO:0007669"/>
    <property type="project" value="UniProtKB-SubCell"/>
</dbReference>
<dbReference type="HAMAP" id="MF_00189">
    <property type="entry name" value="YciB"/>
    <property type="match status" value="1"/>
</dbReference>
<dbReference type="InterPro" id="IPR006008">
    <property type="entry name" value="YciB"/>
</dbReference>
<dbReference type="NCBIfam" id="TIGR00997">
    <property type="entry name" value="ispZ"/>
    <property type="match status" value="1"/>
</dbReference>
<dbReference type="NCBIfam" id="NF001325">
    <property type="entry name" value="PRK00259.1-3"/>
    <property type="match status" value="1"/>
</dbReference>
<dbReference type="PANTHER" id="PTHR36917:SF1">
    <property type="entry name" value="INNER MEMBRANE-SPANNING PROTEIN YCIB"/>
    <property type="match status" value="1"/>
</dbReference>
<dbReference type="PANTHER" id="PTHR36917">
    <property type="entry name" value="INTRACELLULAR SEPTATION PROTEIN A-RELATED"/>
    <property type="match status" value="1"/>
</dbReference>
<dbReference type="Pfam" id="PF04279">
    <property type="entry name" value="IspA"/>
    <property type="match status" value="1"/>
</dbReference>
<feature type="chain" id="PRO_1000021000" description="Inner membrane-spanning protein YciB">
    <location>
        <begin position="1"/>
        <end position="176"/>
    </location>
</feature>
<feature type="transmembrane region" description="Helical" evidence="1">
    <location>
        <begin position="3"/>
        <end position="23"/>
    </location>
</feature>
<feature type="transmembrane region" description="Helical" evidence="1">
    <location>
        <begin position="49"/>
        <end position="69"/>
    </location>
</feature>
<feature type="transmembrane region" description="Helical" evidence="1">
    <location>
        <begin position="72"/>
        <end position="92"/>
    </location>
</feature>
<feature type="transmembrane region" description="Helical" evidence="1">
    <location>
        <begin position="118"/>
        <end position="138"/>
    </location>
</feature>
<feature type="transmembrane region" description="Helical" evidence="1">
    <location>
        <begin position="149"/>
        <end position="169"/>
    </location>
</feature>
<name>YCIB_BURTA</name>
<reference key="1">
    <citation type="journal article" date="2005" name="BMC Genomics">
        <title>Bacterial genome adaptation to niches: divergence of the potential virulence genes in three Burkholderia species of different survival strategies.</title>
        <authorList>
            <person name="Kim H.S."/>
            <person name="Schell M.A."/>
            <person name="Yu Y."/>
            <person name="Ulrich R.L."/>
            <person name="Sarria S.H."/>
            <person name="Nierman W.C."/>
            <person name="DeShazer D."/>
        </authorList>
    </citation>
    <scope>NUCLEOTIDE SEQUENCE [LARGE SCALE GENOMIC DNA]</scope>
    <source>
        <strain>ATCC 700388 / DSM 13276 / CCUG 48851 / CIP 106301 / E264</strain>
    </source>
</reference>
<evidence type="ECO:0000255" key="1">
    <source>
        <dbReference type="HAMAP-Rule" id="MF_00189"/>
    </source>
</evidence>
<proteinExistence type="inferred from homology"/>
<gene>
    <name evidence="1" type="primary">yciB</name>
    <name type="ordered locus">BTH_I2138</name>
</gene>